<sequence length="85" mass="9534">MNLSRQEQRTLHVLAKGGRITHIRDASGRVTAVECYSREGLLLADCTLAVFKKLKTKKLIKSVNGQPYRINTTGLNNVRAQPDNR</sequence>
<accession>B5F4C2</accession>
<gene>
    <name evidence="1" type="primary">yjhX</name>
    <name type="ordered locus">SeAg_B4829</name>
</gene>
<feature type="chain" id="PRO_1000200706" description="UPF0386 protein YjhX">
    <location>
        <begin position="1"/>
        <end position="85"/>
    </location>
</feature>
<comment type="similarity">
    <text evidence="1">Belongs to the UPF0386 family.</text>
</comment>
<organism>
    <name type="scientific">Salmonella agona (strain SL483)</name>
    <dbReference type="NCBI Taxonomy" id="454166"/>
    <lineage>
        <taxon>Bacteria</taxon>
        <taxon>Pseudomonadati</taxon>
        <taxon>Pseudomonadota</taxon>
        <taxon>Gammaproteobacteria</taxon>
        <taxon>Enterobacterales</taxon>
        <taxon>Enterobacteriaceae</taxon>
        <taxon>Salmonella</taxon>
    </lineage>
</organism>
<reference key="1">
    <citation type="journal article" date="2011" name="J. Bacteriol.">
        <title>Comparative genomics of 28 Salmonella enterica isolates: evidence for CRISPR-mediated adaptive sublineage evolution.</title>
        <authorList>
            <person name="Fricke W.F."/>
            <person name="Mammel M.K."/>
            <person name="McDermott P.F."/>
            <person name="Tartera C."/>
            <person name="White D.G."/>
            <person name="Leclerc J.E."/>
            <person name="Ravel J."/>
            <person name="Cebula T.A."/>
        </authorList>
    </citation>
    <scope>NUCLEOTIDE SEQUENCE [LARGE SCALE GENOMIC DNA]</scope>
    <source>
        <strain>SL483</strain>
    </source>
</reference>
<dbReference type="EMBL" id="CP001138">
    <property type="protein sequence ID" value="ACH49378.1"/>
    <property type="molecule type" value="Genomic_DNA"/>
</dbReference>
<dbReference type="RefSeq" id="WP_001054380.1">
    <property type="nucleotide sequence ID" value="NC_011149.1"/>
</dbReference>
<dbReference type="KEGG" id="sea:SeAg_B4829"/>
<dbReference type="HOGENOM" id="CLU_164736_0_0_6"/>
<dbReference type="Proteomes" id="UP000008819">
    <property type="component" value="Chromosome"/>
</dbReference>
<dbReference type="HAMAP" id="MF_00827">
    <property type="entry name" value="UPF0386"/>
    <property type="match status" value="1"/>
</dbReference>
<dbReference type="InterPro" id="IPR018654">
    <property type="entry name" value="YjhX_toxin"/>
</dbReference>
<dbReference type="NCBIfam" id="NF010240">
    <property type="entry name" value="PRK13687.1"/>
    <property type="match status" value="1"/>
</dbReference>
<dbReference type="Pfam" id="PF09857">
    <property type="entry name" value="YjhX_toxin"/>
    <property type="match status" value="1"/>
</dbReference>
<evidence type="ECO:0000255" key="1">
    <source>
        <dbReference type="HAMAP-Rule" id="MF_00827"/>
    </source>
</evidence>
<protein>
    <recommendedName>
        <fullName evidence="1">UPF0386 protein YjhX</fullName>
    </recommendedName>
</protein>
<name>YJHX_SALA4</name>
<proteinExistence type="inferred from homology"/>